<dbReference type="PIR" id="A05174">
    <property type="entry name" value="A05174"/>
</dbReference>
<dbReference type="GO" id="GO:0005576">
    <property type="term" value="C:extracellular region"/>
    <property type="evidence" value="ECO:0007669"/>
    <property type="project" value="UniProtKB-SubCell"/>
</dbReference>
<dbReference type="GO" id="GO:0006952">
    <property type="term" value="P:defense response"/>
    <property type="evidence" value="ECO:0007669"/>
    <property type="project" value="UniProtKB-KW"/>
</dbReference>
<dbReference type="InterPro" id="IPR013266">
    <property type="entry name" value="Tryptophillin"/>
</dbReference>
<dbReference type="Pfam" id="PF08248">
    <property type="entry name" value="Tryp_FSAP"/>
    <property type="match status" value="1"/>
</dbReference>
<proteinExistence type="evidence at protein level"/>
<feature type="peptide" id="PRO_0000043844" description="Tryptophyllin-13">
    <location>
        <begin position="1"/>
        <end position="13"/>
    </location>
</feature>
<feature type="modified residue" description="Pyrrolidone carboxylic acid" evidence="1">
    <location>
        <position position="1"/>
    </location>
</feature>
<reference key="1">
    <citation type="journal article" date="1986" name="Int. J. Pept. Protein Res.">
        <title>Primary structure determination of a tryptophan-containing tridecapeptide from Phyllomedusa rohdei.</title>
        <authorList>
            <person name="Montecucchi P.C."/>
            <person name="Gozzini L."/>
            <person name="Erspamer V."/>
        </authorList>
    </citation>
    <scope>PROTEIN SEQUENCE</scope>
    <scope>PYROGLUTAMATE FORMATION AT GLN-1</scope>
</reference>
<protein>
    <recommendedName>
        <fullName>Tryptophyllin-13</fullName>
    </recommendedName>
</protein>
<accession>P04096</accession>
<name>TY13_PITRO</name>
<organism>
    <name type="scientific">Pithecopus rohdei</name>
    <name type="common">Rohde's leaf frog</name>
    <name type="synonym">Phyllomedusa rohdei</name>
    <dbReference type="NCBI Taxonomy" id="8394"/>
    <lineage>
        <taxon>Eukaryota</taxon>
        <taxon>Metazoa</taxon>
        <taxon>Chordata</taxon>
        <taxon>Craniata</taxon>
        <taxon>Vertebrata</taxon>
        <taxon>Euteleostomi</taxon>
        <taxon>Amphibia</taxon>
        <taxon>Batrachia</taxon>
        <taxon>Anura</taxon>
        <taxon>Neobatrachia</taxon>
        <taxon>Hyloidea</taxon>
        <taxon>Hylidae</taxon>
        <taxon>Phyllomedusinae</taxon>
        <taxon>Pithecopus</taxon>
    </lineage>
</organism>
<evidence type="ECO:0000269" key="1">
    <source ref="1"/>
</evidence>
<evidence type="ECO:0000305" key="2"/>
<keyword id="KW-0878">Amphibian defense peptide</keyword>
<keyword id="KW-0903">Direct protein sequencing</keyword>
<keyword id="KW-0873">Pyrrolidone carboxylic acid</keyword>
<keyword id="KW-0964">Secreted</keyword>
<comment type="subcellular location">
    <subcellularLocation>
        <location>Secreted</location>
    </subcellularLocation>
</comment>
<comment type="tissue specificity">
    <text>Expressed by the skin glands.</text>
</comment>
<comment type="similarity">
    <text evidence="2">Belongs to the frog skin active peptide (FSAP) family. Tryptophillin subfamily.</text>
</comment>
<sequence>QEKPYWPPPIYPM</sequence>